<name>METE_SALTY</name>
<gene>
    <name evidence="2" type="primary">metE</name>
    <name type="ordered locus">STM3965</name>
    <name type="ORF">STMD1.25</name>
</gene>
<feature type="initiator methionine" description="Removed" evidence="1">
    <location>
        <position position="1"/>
    </location>
</feature>
<feature type="chain" id="PRO_0000098655" description="5-methyltetrahydropteroyltriglutamate--homocysteine methyltransferase">
    <location>
        <begin position="2"/>
        <end position="754"/>
    </location>
</feature>
<feature type="active site" description="Proton donor" evidence="2">
    <location>
        <position position="694"/>
    </location>
</feature>
<feature type="binding site" evidence="2">
    <location>
        <begin position="17"/>
        <end position="20"/>
    </location>
    <ligand>
        <name>5-methyltetrahydropteroyltri-L-glutamate</name>
        <dbReference type="ChEBI" id="CHEBI:58207"/>
    </ligand>
</feature>
<feature type="binding site" evidence="2">
    <location>
        <position position="117"/>
    </location>
    <ligand>
        <name>5-methyltetrahydropteroyltri-L-glutamate</name>
        <dbReference type="ChEBI" id="CHEBI:58207"/>
    </ligand>
</feature>
<feature type="binding site" evidence="2">
    <location>
        <begin position="431"/>
        <end position="433"/>
    </location>
    <ligand>
        <name>L-homocysteine</name>
        <dbReference type="ChEBI" id="CHEBI:58199"/>
    </ligand>
</feature>
<feature type="binding site" evidence="2">
    <location>
        <begin position="431"/>
        <end position="433"/>
    </location>
    <ligand>
        <name>L-methionine</name>
        <dbReference type="ChEBI" id="CHEBI:57844"/>
    </ligand>
</feature>
<feature type="binding site" evidence="2">
    <location>
        <position position="484"/>
    </location>
    <ligand>
        <name>L-homocysteine</name>
        <dbReference type="ChEBI" id="CHEBI:58199"/>
    </ligand>
</feature>
<feature type="binding site" evidence="2">
    <location>
        <position position="484"/>
    </location>
    <ligand>
        <name>L-methionine</name>
        <dbReference type="ChEBI" id="CHEBI:57844"/>
    </ligand>
</feature>
<feature type="binding site" evidence="2">
    <location>
        <begin position="515"/>
        <end position="516"/>
    </location>
    <ligand>
        <name>5-methyltetrahydropteroyltri-L-glutamate</name>
        <dbReference type="ChEBI" id="CHEBI:58207"/>
    </ligand>
</feature>
<feature type="binding site" evidence="2">
    <location>
        <position position="561"/>
    </location>
    <ligand>
        <name>5-methyltetrahydropteroyltri-L-glutamate</name>
        <dbReference type="ChEBI" id="CHEBI:58207"/>
    </ligand>
</feature>
<feature type="binding site" evidence="2">
    <location>
        <position position="599"/>
    </location>
    <ligand>
        <name>L-homocysteine</name>
        <dbReference type="ChEBI" id="CHEBI:58199"/>
    </ligand>
</feature>
<feature type="binding site" evidence="2">
    <location>
        <position position="599"/>
    </location>
    <ligand>
        <name>L-methionine</name>
        <dbReference type="ChEBI" id="CHEBI:57844"/>
    </ligand>
</feature>
<feature type="binding site" evidence="2">
    <location>
        <position position="605"/>
    </location>
    <ligand>
        <name>5-methyltetrahydropteroyltri-L-glutamate</name>
        <dbReference type="ChEBI" id="CHEBI:58207"/>
    </ligand>
</feature>
<feature type="binding site" evidence="2">
    <location>
        <position position="641"/>
    </location>
    <ligand>
        <name>Zn(2+)</name>
        <dbReference type="ChEBI" id="CHEBI:29105"/>
        <note>catalytic</note>
    </ligand>
</feature>
<feature type="binding site" evidence="2">
    <location>
        <position position="643"/>
    </location>
    <ligand>
        <name>Zn(2+)</name>
        <dbReference type="ChEBI" id="CHEBI:29105"/>
        <note>catalytic</note>
    </ligand>
</feature>
<feature type="binding site" evidence="2">
    <location>
        <position position="665"/>
    </location>
    <ligand>
        <name>Zn(2+)</name>
        <dbReference type="ChEBI" id="CHEBI:29105"/>
        <note>catalytic</note>
    </ligand>
</feature>
<feature type="binding site" evidence="2">
    <location>
        <position position="726"/>
    </location>
    <ligand>
        <name>Zn(2+)</name>
        <dbReference type="ChEBI" id="CHEBI:29105"/>
        <note>catalytic</note>
    </ligand>
</feature>
<reference key="1">
    <citation type="journal article" date="2001" name="Nature">
        <title>Complete genome sequence of Salmonella enterica serovar Typhimurium LT2.</title>
        <authorList>
            <person name="McClelland M."/>
            <person name="Sanderson K.E."/>
            <person name="Spieth J."/>
            <person name="Clifton S.W."/>
            <person name="Latreille P."/>
            <person name="Courtney L."/>
            <person name="Porwollik S."/>
            <person name="Ali J."/>
            <person name="Dante M."/>
            <person name="Du F."/>
            <person name="Hou S."/>
            <person name="Layman D."/>
            <person name="Leonard S."/>
            <person name="Nguyen C."/>
            <person name="Scott K."/>
            <person name="Holmes A."/>
            <person name="Grewal N."/>
            <person name="Mulvaney E."/>
            <person name="Ryan E."/>
            <person name="Sun H."/>
            <person name="Florea L."/>
            <person name="Miller W."/>
            <person name="Stoneking T."/>
            <person name="Nhan M."/>
            <person name="Waterston R."/>
            <person name="Wilson R.K."/>
        </authorList>
    </citation>
    <scope>NUCLEOTIDE SEQUENCE [LARGE SCALE GENOMIC DNA]</scope>
    <source>
        <strain>LT2 / SGSC1412 / ATCC 700720</strain>
    </source>
</reference>
<dbReference type="EC" id="2.1.1.14" evidence="2"/>
<dbReference type="EMBL" id="AF233324">
    <property type="protein sequence ID" value="AAF33427.1"/>
    <property type="molecule type" value="Genomic_DNA"/>
</dbReference>
<dbReference type="EMBL" id="AE006468">
    <property type="protein sequence ID" value="AAL22809.1"/>
    <property type="molecule type" value="Genomic_DNA"/>
</dbReference>
<dbReference type="RefSeq" id="NP_462850.1">
    <property type="nucleotide sequence ID" value="NC_003197.2"/>
</dbReference>
<dbReference type="RefSeq" id="WP_000154192.1">
    <property type="nucleotide sequence ID" value="NC_003197.2"/>
</dbReference>
<dbReference type="SMR" id="Q9L6N1"/>
<dbReference type="STRING" id="99287.STM3965"/>
<dbReference type="PaxDb" id="99287-STM3965"/>
<dbReference type="GeneID" id="1255491"/>
<dbReference type="KEGG" id="stm:STM3965"/>
<dbReference type="PATRIC" id="fig|99287.12.peg.4183"/>
<dbReference type="HOGENOM" id="CLU_013175_0_0_6"/>
<dbReference type="OMA" id="KVMKGML"/>
<dbReference type="PhylomeDB" id="Q9L6N1"/>
<dbReference type="BioCyc" id="SENT99287:STM3965-MONOMER"/>
<dbReference type="UniPathway" id="UPA00051">
    <property type="reaction ID" value="UER00082"/>
</dbReference>
<dbReference type="PHI-base" id="PHI:8091"/>
<dbReference type="Proteomes" id="UP000001014">
    <property type="component" value="Chromosome"/>
</dbReference>
<dbReference type="GO" id="GO:0003871">
    <property type="term" value="F:5-methyltetrahydropteroyltriglutamate-homocysteine S-methyltransferase activity"/>
    <property type="evidence" value="ECO:0007669"/>
    <property type="project" value="UniProtKB-UniRule"/>
</dbReference>
<dbReference type="GO" id="GO:0008270">
    <property type="term" value="F:zinc ion binding"/>
    <property type="evidence" value="ECO:0007669"/>
    <property type="project" value="InterPro"/>
</dbReference>
<dbReference type="GO" id="GO:0009086">
    <property type="term" value="P:methionine biosynthetic process"/>
    <property type="evidence" value="ECO:0007669"/>
    <property type="project" value="UniProtKB-UniRule"/>
</dbReference>
<dbReference type="GO" id="GO:0032259">
    <property type="term" value="P:methylation"/>
    <property type="evidence" value="ECO:0007669"/>
    <property type="project" value="UniProtKB-KW"/>
</dbReference>
<dbReference type="CDD" id="cd03311">
    <property type="entry name" value="CIMS_C_terminal_like"/>
    <property type="match status" value="1"/>
</dbReference>
<dbReference type="CDD" id="cd03312">
    <property type="entry name" value="CIMS_N_terminal_like"/>
    <property type="match status" value="1"/>
</dbReference>
<dbReference type="FunFam" id="3.20.20.210:FF:000002">
    <property type="entry name" value="5-methyltetrahydropteroyltriglutamate--homocysteine methyltransferase"/>
    <property type="match status" value="1"/>
</dbReference>
<dbReference type="FunFam" id="3.20.20.210:FF:000003">
    <property type="entry name" value="5-methyltetrahydropteroyltriglutamate--homocysteine methyltransferase"/>
    <property type="match status" value="1"/>
</dbReference>
<dbReference type="Gene3D" id="3.20.20.210">
    <property type="match status" value="2"/>
</dbReference>
<dbReference type="HAMAP" id="MF_00172">
    <property type="entry name" value="Meth_synth"/>
    <property type="match status" value="1"/>
</dbReference>
<dbReference type="InterPro" id="IPR013215">
    <property type="entry name" value="Cbl-indep_Met_Synth_N"/>
</dbReference>
<dbReference type="InterPro" id="IPR006276">
    <property type="entry name" value="Cobalamin-indep_Met_synthase"/>
</dbReference>
<dbReference type="InterPro" id="IPR002629">
    <property type="entry name" value="Met_Synth_C/arc"/>
</dbReference>
<dbReference type="InterPro" id="IPR038071">
    <property type="entry name" value="UROD/MetE-like_sf"/>
</dbReference>
<dbReference type="NCBIfam" id="TIGR01371">
    <property type="entry name" value="met_syn_B12ind"/>
    <property type="match status" value="1"/>
</dbReference>
<dbReference type="NCBIfam" id="NF003556">
    <property type="entry name" value="PRK05222.1"/>
    <property type="match status" value="1"/>
</dbReference>
<dbReference type="PANTHER" id="PTHR30519">
    <property type="entry name" value="5-METHYLTETRAHYDROPTEROYLTRIGLUTAMATE--HOMOCYSTEINE METHYLTRANSFERASE"/>
    <property type="match status" value="1"/>
</dbReference>
<dbReference type="Pfam" id="PF08267">
    <property type="entry name" value="Meth_synt_1"/>
    <property type="match status" value="1"/>
</dbReference>
<dbReference type="Pfam" id="PF01717">
    <property type="entry name" value="Meth_synt_2"/>
    <property type="match status" value="1"/>
</dbReference>
<dbReference type="PIRSF" id="PIRSF000382">
    <property type="entry name" value="MeTrfase_B12_ind"/>
    <property type="match status" value="1"/>
</dbReference>
<dbReference type="SUPFAM" id="SSF51726">
    <property type="entry name" value="UROD/MetE-like"/>
    <property type="match status" value="2"/>
</dbReference>
<accession>Q9L6N1</accession>
<sequence>MTILTHTLGFPRVGLRRELKKAQESYWAGNTTREALLAVGRELRARHWEQQKQAGIDLLPVGDFAWYDHVLTTSLLLGNVPARHQNNDGSVDIDTLFRIGRGRAPTGEPAAAAEMTKWFNTNYHYIVPEFSKGQQFRLTWTQLLEEVDEALALGHKIKPVLLGPVTYLWLGKVKGEPFDRLTLLKDILPVYQHVLAELAKRGIEWVQIDEPALVLELPQAWLDAFKPAYDALAGQVKLLLTTYFEGVTPNLDTIIALPVQGLHVDLIHGKDDVAELHQRLPVDWLLSAGLINGRNVWRADLTEKYAQINAIVGKRALWVASSCSLLHSPIDLSVETRLDTEVKSWFAFALQKCGELALLRDALNSGETAALEEWSAPIQARRHSRRVHNAAVEKRLAAITAQDSQRENPYEVRAEAQRARFKLPAWPTTTIGSFPQTTEIRGLRLDFKKGNLDANHYRTGIAEHIKQAIIEQERLGLDVLVHGEAERNDMVEYFGEHLDGFVFTQNGWVQSYGSRCVKPPVVIGDISRPAPITVEWAKYAQSLTDKPVKGMLTGPVTILCWSFPREDVTRETIAKQIALALRDEVADLEAAGIGIIQIDEPALREGLPLRRSDWDAYLEWGVEAFRINAAVAKDETQIHTHMCYCEFNDIMDSIAALDADVITIETSRSDMELLESFEAFDYPNEIGPGVYDIHSPNVPSVEWIEALLKKAAQRIPAQRLWVNPDCGLKTRGWPETRAALANMVKAAHNLRQAK</sequence>
<organism>
    <name type="scientific">Salmonella typhimurium (strain LT2 / SGSC1412 / ATCC 700720)</name>
    <dbReference type="NCBI Taxonomy" id="99287"/>
    <lineage>
        <taxon>Bacteria</taxon>
        <taxon>Pseudomonadati</taxon>
        <taxon>Pseudomonadota</taxon>
        <taxon>Gammaproteobacteria</taxon>
        <taxon>Enterobacterales</taxon>
        <taxon>Enterobacteriaceae</taxon>
        <taxon>Salmonella</taxon>
    </lineage>
</organism>
<protein>
    <recommendedName>
        <fullName evidence="2">5-methyltetrahydropteroyltriglutamate--homocysteine methyltransferase</fullName>
        <ecNumber evidence="2">2.1.1.14</ecNumber>
    </recommendedName>
    <alternativeName>
        <fullName evidence="2">Cobalamin-independent methionine synthase</fullName>
    </alternativeName>
    <alternativeName>
        <fullName evidence="2">Methionine synthase, vitamin-B12 independent isozyme</fullName>
    </alternativeName>
</protein>
<keyword id="KW-0028">Amino-acid biosynthesis</keyword>
<keyword id="KW-0479">Metal-binding</keyword>
<keyword id="KW-0486">Methionine biosynthesis</keyword>
<keyword id="KW-0489">Methyltransferase</keyword>
<keyword id="KW-1185">Reference proteome</keyword>
<keyword id="KW-0677">Repeat</keyword>
<keyword id="KW-0808">Transferase</keyword>
<keyword id="KW-0862">Zinc</keyword>
<proteinExistence type="inferred from homology"/>
<evidence type="ECO:0000250" key="1"/>
<evidence type="ECO:0000255" key="2">
    <source>
        <dbReference type="HAMAP-Rule" id="MF_00172"/>
    </source>
</evidence>
<evidence type="ECO:0000305" key="3"/>
<comment type="function">
    <text evidence="2">Catalyzes the transfer of a methyl group from 5-methyltetrahydrofolate to homocysteine resulting in methionine formation.</text>
</comment>
<comment type="catalytic activity">
    <reaction evidence="2">
        <text>5-methyltetrahydropteroyltri-L-glutamate + L-homocysteine = tetrahydropteroyltri-L-glutamate + L-methionine</text>
        <dbReference type="Rhea" id="RHEA:21196"/>
        <dbReference type="ChEBI" id="CHEBI:57844"/>
        <dbReference type="ChEBI" id="CHEBI:58140"/>
        <dbReference type="ChEBI" id="CHEBI:58199"/>
        <dbReference type="ChEBI" id="CHEBI:58207"/>
        <dbReference type="EC" id="2.1.1.14"/>
    </reaction>
</comment>
<comment type="cofactor">
    <cofactor evidence="2">
        <name>Zn(2+)</name>
        <dbReference type="ChEBI" id="CHEBI:29105"/>
    </cofactor>
    <text evidence="2">Binds 1 zinc ion per subunit.</text>
</comment>
<comment type="pathway">
    <text evidence="2">Amino-acid biosynthesis; L-methionine biosynthesis via de novo pathway; L-methionine from L-homocysteine (MetE route): step 1/1.</text>
</comment>
<comment type="similarity">
    <text evidence="2 3">Belongs to the vitamin-B12 independent methionine synthase family.</text>
</comment>